<keyword id="KW-0413">Isomerase</keyword>
<keyword id="KW-0819">tRNA processing</keyword>
<feature type="chain" id="PRO_1000084742" description="tRNA pseudouridine synthase D">
    <location>
        <begin position="1"/>
        <end position="339"/>
    </location>
</feature>
<feature type="domain" description="TRUD" evidence="1">
    <location>
        <begin position="155"/>
        <end position="311"/>
    </location>
</feature>
<feature type="active site" description="Nucleophile" evidence="1">
    <location>
        <position position="80"/>
    </location>
</feature>
<comment type="function">
    <text evidence="1">Responsible for synthesis of pseudouridine from uracil-13 in transfer RNAs.</text>
</comment>
<comment type="catalytic activity">
    <reaction evidence="1">
        <text>uridine(13) in tRNA = pseudouridine(13) in tRNA</text>
        <dbReference type="Rhea" id="RHEA:42540"/>
        <dbReference type="Rhea" id="RHEA-COMP:10105"/>
        <dbReference type="Rhea" id="RHEA-COMP:10106"/>
        <dbReference type="ChEBI" id="CHEBI:65314"/>
        <dbReference type="ChEBI" id="CHEBI:65315"/>
        <dbReference type="EC" id="5.4.99.27"/>
    </reaction>
</comment>
<comment type="similarity">
    <text evidence="1">Belongs to the pseudouridine synthase TruD family.</text>
</comment>
<organism>
    <name type="scientific">Haemophilus influenzae (strain PittEE)</name>
    <dbReference type="NCBI Taxonomy" id="374930"/>
    <lineage>
        <taxon>Bacteria</taxon>
        <taxon>Pseudomonadati</taxon>
        <taxon>Pseudomonadota</taxon>
        <taxon>Gammaproteobacteria</taxon>
        <taxon>Pasteurellales</taxon>
        <taxon>Pasteurellaceae</taxon>
        <taxon>Haemophilus</taxon>
    </lineage>
</organism>
<sequence length="339" mass="38503">MLEQLPYLALKTPPKTTALLKAECADFIVKEHLGYEMSGDGEFVALYVRKTDCNTLFVGEKLAKFAGVSERNMGYAGLKDRRAVTEQWFCLQMPGMETPDFSQFELDGVEILTVTRHNRKIRTGSLEGNYFDILLRGAEESDELKVRLDFVANFGFPNYFTEQRFGREGHNLTQALRWAQGEIKVKDRKKRSFYLSAARSEIFNLVVAARIAKGATNQVLPNDIVQLAGSHSWFKADEKEDLNALQVRLENQDILLTAPLIGEDILAASDIENEIVNQHSVFDPLMKQERMKAARRPLLMKAKGFSWAFELEGLRLKFYLPAGSYATALVRELVNYTEE</sequence>
<accession>A5UE25</accession>
<proteinExistence type="inferred from homology"/>
<protein>
    <recommendedName>
        <fullName evidence="1">tRNA pseudouridine synthase D</fullName>
        <ecNumber evidence="1">5.4.99.27</ecNumber>
    </recommendedName>
    <alternativeName>
        <fullName evidence="1">tRNA pseudouridine(13) synthase</fullName>
    </alternativeName>
    <alternativeName>
        <fullName evidence="1">tRNA pseudouridylate synthase D</fullName>
    </alternativeName>
    <alternativeName>
        <fullName evidence="1">tRNA-uridine isomerase D</fullName>
    </alternativeName>
</protein>
<evidence type="ECO:0000255" key="1">
    <source>
        <dbReference type="HAMAP-Rule" id="MF_01082"/>
    </source>
</evidence>
<name>TRUD_HAEIE</name>
<gene>
    <name evidence="1" type="primary">truD</name>
    <name type="ordered locus">CGSHiEE_08635</name>
</gene>
<reference key="1">
    <citation type="journal article" date="2007" name="Genome Biol.">
        <title>Characterization and modeling of the Haemophilus influenzae core and supragenomes based on the complete genomic sequences of Rd and 12 clinical nontypeable strains.</title>
        <authorList>
            <person name="Hogg J.S."/>
            <person name="Hu F.Z."/>
            <person name="Janto B."/>
            <person name="Boissy R."/>
            <person name="Hayes J."/>
            <person name="Keefe R."/>
            <person name="Post J.C."/>
            <person name="Ehrlich G.D."/>
        </authorList>
    </citation>
    <scope>NUCLEOTIDE SEQUENCE [LARGE SCALE GENOMIC DNA]</scope>
    <source>
        <strain>PittEE</strain>
    </source>
</reference>
<dbReference type="EC" id="5.4.99.27" evidence="1"/>
<dbReference type="EMBL" id="CP000671">
    <property type="protein sequence ID" value="ABQ99026.1"/>
    <property type="molecule type" value="Genomic_DNA"/>
</dbReference>
<dbReference type="SMR" id="A5UE25"/>
<dbReference type="KEGG" id="hip:CGSHiEE_08635"/>
<dbReference type="HOGENOM" id="CLU_005281_4_0_6"/>
<dbReference type="GO" id="GO:0005829">
    <property type="term" value="C:cytosol"/>
    <property type="evidence" value="ECO:0007669"/>
    <property type="project" value="TreeGrafter"/>
</dbReference>
<dbReference type="GO" id="GO:0003723">
    <property type="term" value="F:RNA binding"/>
    <property type="evidence" value="ECO:0007669"/>
    <property type="project" value="InterPro"/>
</dbReference>
<dbReference type="GO" id="GO:0160150">
    <property type="term" value="F:tRNA pseudouridine(13) synthase activity"/>
    <property type="evidence" value="ECO:0007669"/>
    <property type="project" value="UniProtKB-EC"/>
</dbReference>
<dbReference type="GO" id="GO:0031119">
    <property type="term" value="P:tRNA pseudouridine synthesis"/>
    <property type="evidence" value="ECO:0007669"/>
    <property type="project" value="UniProtKB-UniRule"/>
</dbReference>
<dbReference type="CDD" id="cd02575">
    <property type="entry name" value="PseudoU_synth_EcTruD"/>
    <property type="match status" value="1"/>
</dbReference>
<dbReference type="FunFam" id="3.30.2350.20:FF:000008">
    <property type="entry name" value="tRNA pseudouridine synthase D"/>
    <property type="match status" value="1"/>
</dbReference>
<dbReference type="Gene3D" id="3.30.2350.20">
    <property type="entry name" value="TruD, catalytic domain"/>
    <property type="match status" value="1"/>
</dbReference>
<dbReference type="Gene3D" id="3.30.2340.10">
    <property type="entry name" value="TruD, insertion domain"/>
    <property type="match status" value="1"/>
</dbReference>
<dbReference type="HAMAP" id="MF_01082">
    <property type="entry name" value="TruD"/>
    <property type="match status" value="1"/>
</dbReference>
<dbReference type="InterPro" id="IPR020103">
    <property type="entry name" value="PsdUridine_synth_cat_dom_sf"/>
</dbReference>
<dbReference type="InterPro" id="IPR001656">
    <property type="entry name" value="PsdUridine_synth_TruD"/>
</dbReference>
<dbReference type="InterPro" id="IPR020119">
    <property type="entry name" value="PsdUridine_synth_TruD_CS"/>
</dbReference>
<dbReference type="InterPro" id="IPR011760">
    <property type="entry name" value="PsdUridine_synth_TruD_insert"/>
</dbReference>
<dbReference type="InterPro" id="IPR042214">
    <property type="entry name" value="TruD_catalytic"/>
</dbReference>
<dbReference type="InterPro" id="IPR043165">
    <property type="entry name" value="TruD_insert_sf"/>
</dbReference>
<dbReference type="InterPro" id="IPR050170">
    <property type="entry name" value="TruD_pseudoU_synthase"/>
</dbReference>
<dbReference type="NCBIfam" id="NF002155">
    <property type="entry name" value="PRK00984.1-4"/>
    <property type="match status" value="1"/>
</dbReference>
<dbReference type="NCBIfam" id="TIGR00094">
    <property type="entry name" value="tRNA_TruD_broad"/>
    <property type="match status" value="1"/>
</dbReference>
<dbReference type="PANTHER" id="PTHR47811">
    <property type="entry name" value="TRNA PSEUDOURIDINE SYNTHASE D"/>
    <property type="match status" value="1"/>
</dbReference>
<dbReference type="PANTHER" id="PTHR47811:SF1">
    <property type="entry name" value="TRNA PSEUDOURIDINE SYNTHASE D"/>
    <property type="match status" value="1"/>
</dbReference>
<dbReference type="Pfam" id="PF01142">
    <property type="entry name" value="TruD"/>
    <property type="match status" value="2"/>
</dbReference>
<dbReference type="SUPFAM" id="SSF55120">
    <property type="entry name" value="Pseudouridine synthase"/>
    <property type="match status" value="1"/>
</dbReference>
<dbReference type="PROSITE" id="PS50984">
    <property type="entry name" value="TRUD"/>
    <property type="match status" value="1"/>
</dbReference>
<dbReference type="PROSITE" id="PS01268">
    <property type="entry name" value="UPF0024"/>
    <property type="match status" value="1"/>
</dbReference>